<name>PYRF_BUCAP</name>
<protein>
    <recommendedName>
        <fullName evidence="1">Orotidine 5'-phosphate decarboxylase</fullName>
        <ecNumber evidence="1">4.1.1.23</ecNumber>
    </recommendedName>
    <alternativeName>
        <fullName evidence="1">OMP decarboxylase</fullName>
        <shortName evidence="1">OMPDCase</shortName>
        <shortName evidence="1">OMPdecase</shortName>
    </alternativeName>
</protein>
<accession>Q8K9Q1</accession>
<organism>
    <name type="scientific">Buchnera aphidicola subsp. Schizaphis graminum (strain Sg)</name>
    <dbReference type="NCBI Taxonomy" id="198804"/>
    <lineage>
        <taxon>Bacteria</taxon>
        <taxon>Pseudomonadati</taxon>
        <taxon>Pseudomonadota</taxon>
        <taxon>Gammaproteobacteria</taxon>
        <taxon>Enterobacterales</taxon>
        <taxon>Erwiniaceae</taxon>
        <taxon>Buchnera</taxon>
    </lineage>
</organism>
<gene>
    <name evidence="1" type="primary">pyrF</name>
    <name type="ordered locus">BUsg_260</name>
</gene>
<reference key="1">
    <citation type="journal article" date="2002" name="Science">
        <title>50 million years of genomic stasis in endosymbiotic bacteria.</title>
        <authorList>
            <person name="Tamas I."/>
            <person name="Klasson L."/>
            <person name="Canbaeck B."/>
            <person name="Naeslund A.K."/>
            <person name="Eriksson A.-S."/>
            <person name="Wernegreen J.J."/>
            <person name="Sandstroem J.P."/>
            <person name="Moran N.A."/>
            <person name="Andersson S.G.E."/>
        </authorList>
    </citation>
    <scope>NUCLEOTIDE SEQUENCE [LARGE SCALE GENOMIC DNA]</scope>
    <source>
        <strain>Sg</strain>
    </source>
</reference>
<sequence>MLYTNNYNIPKIIIALDFYNKKEAMTLVDLLDPSVFYLKIGKEMFTILGFKFVKELHKLGFNVFLDLKFHDIPNTVFNATKAAADLGIWMLSVHASGGKNMLLSAKKALKSFKKPPLLIAVTMLTSLKEKDLKEIGIKISLKDYILILSKLSNDCGLDGIVCPGNQAKKIKSLYGDKYKIITPGIRLSSDSSFDQKHIITPKEAKEFQIDYIVIGRSITTSKNPIKKLNLIIESMR</sequence>
<dbReference type="EC" id="4.1.1.23" evidence="1"/>
<dbReference type="EMBL" id="AE013218">
    <property type="protein sequence ID" value="AAM67818.1"/>
    <property type="molecule type" value="Genomic_DNA"/>
</dbReference>
<dbReference type="RefSeq" id="WP_011053785.1">
    <property type="nucleotide sequence ID" value="NC_004061.1"/>
</dbReference>
<dbReference type="SMR" id="Q8K9Q1"/>
<dbReference type="STRING" id="198804.BUsg_260"/>
<dbReference type="GeneID" id="93003730"/>
<dbReference type="KEGG" id="bas:BUsg_260"/>
<dbReference type="eggNOG" id="COG0284">
    <property type="taxonomic scope" value="Bacteria"/>
</dbReference>
<dbReference type="HOGENOM" id="CLU_067069_0_0_6"/>
<dbReference type="UniPathway" id="UPA00070">
    <property type="reaction ID" value="UER00120"/>
</dbReference>
<dbReference type="Proteomes" id="UP000000416">
    <property type="component" value="Chromosome"/>
</dbReference>
<dbReference type="GO" id="GO:0005829">
    <property type="term" value="C:cytosol"/>
    <property type="evidence" value="ECO:0007669"/>
    <property type="project" value="TreeGrafter"/>
</dbReference>
<dbReference type="GO" id="GO:0004590">
    <property type="term" value="F:orotidine-5'-phosphate decarboxylase activity"/>
    <property type="evidence" value="ECO:0007669"/>
    <property type="project" value="UniProtKB-UniRule"/>
</dbReference>
<dbReference type="GO" id="GO:0006207">
    <property type="term" value="P:'de novo' pyrimidine nucleobase biosynthetic process"/>
    <property type="evidence" value="ECO:0007669"/>
    <property type="project" value="InterPro"/>
</dbReference>
<dbReference type="GO" id="GO:0044205">
    <property type="term" value="P:'de novo' UMP biosynthetic process"/>
    <property type="evidence" value="ECO:0007669"/>
    <property type="project" value="UniProtKB-UniRule"/>
</dbReference>
<dbReference type="CDD" id="cd04725">
    <property type="entry name" value="OMP_decarboxylase_like"/>
    <property type="match status" value="1"/>
</dbReference>
<dbReference type="FunFam" id="3.20.20.70:FF:000015">
    <property type="entry name" value="Orotidine 5'-phosphate decarboxylase"/>
    <property type="match status" value="1"/>
</dbReference>
<dbReference type="Gene3D" id="3.20.20.70">
    <property type="entry name" value="Aldolase class I"/>
    <property type="match status" value="1"/>
</dbReference>
<dbReference type="HAMAP" id="MF_01200_B">
    <property type="entry name" value="OMPdecase_type1_B"/>
    <property type="match status" value="1"/>
</dbReference>
<dbReference type="InterPro" id="IPR013785">
    <property type="entry name" value="Aldolase_TIM"/>
</dbReference>
<dbReference type="InterPro" id="IPR014732">
    <property type="entry name" value="OMPdecase"/>
</dbReference>
<dbReference type="InterPro" id="IPR018089">
    <property type="entry name" value="OMPdecase_AS"/>
</dbReference>
<dbReference type="InterPro" id="IPR047596">
    <property type="entry name" value="OMPdecase_bac"/>
</dbReference>
<dbReference type="InterPro" id="IPR001754">
    <property type="entry name" value="OMPdeCOase_dom"/>
</dbReference>
<dbReference type="InterPro" id="IPR011060">
    <property type="entry name" value="RibuloseP-bd_barrel"/>
</dbReference>
<dbReference type="NCBIfam" id="NF001273">
    <property type="entry name" value="PRK00230.1"/>
    <property type="match status" value="1"/>
</dbReference>
<dbReference type="NCBIfam" id="TIGR01740">
    <property type="entry name" value="pyrF"/>
    <property type="match status" value="1"/>
</dbReference>
<dbReference type="PANTHER" id="PTHR32119">
    <property type="entry name" value="OROTIDINE 5'-PHOSPHATE DECARBOXYLASE"/>
    <property type="match status" value="1"/>
</dbReference>
<dbReference type="PANTHER" id="PTHR32119:SF2">
    <property type="entry name" value="OROTIDINE 5'-PHOSPHATE DECARBOXYLASE"/>
    <property type="match status" value="1"/>
</dbReference>
<dbReference type="Pfam" id="PF00215">
    <property type="entry name" value="OMPdecase"/>
    <property type="match status" value="1"/>
</dbReference>
<dbReference type="SMART" id="SM00934">
    <property type="entry name" value="OMPdecase"/>
    <property type="match status" value="1"/>
</dbReference>
<dbReference type="SUPFAM" id="SSF51366">
    <property type="entry name" value="Ribulose-phoshate binding barrel"/>
    <property type="match status" value="1"/>
</dbReference>
<dbReference type="PROSITE" id="PS00156">
    <property type="entry name" value="OMPDECASE"/>
    <property type="match status" value="1"/>
</dbReference>
<proteinExistence type="inferred from homology"/>
<keyword id="KW-0210">Decarboxylase</keyword>
<keyword id="KW-0456">Lyase</keyword>
<keyword id="KW-0665">Pyrimidine biosynthesis</keyword>
<comment type="function">
    <text evidence="1">Catalyzes the decarboxylation of orotidine 5'-monophosphate (OMP) to uridine 5'-monophosphate (UMP).</text>
</comment>
<comment type="catalytic activity">
    <reaction evidence="1">
        <text>orotidine 5'-phosphate + H(+) = UMP + CO2</text>
        <dbReference type="Rhea" id="RHEA:11596"/>
        <dbReference type="ChEBI" id="CHEBI:15378"/>
        <dbReference type="ChEBI" id="CHEBI:16526"/>
        <dbReference type="ChEBI" id="CHEBI:57538"/>
        <dbReference type="ChEBI" id="CHEBI:57865"/>
        <dbReference type="EC" id="4.1.1.23"/>
    </reaction>
</comment>
<comment type="pathway">
    <text evidence="1">Pyrimidine metabolism; UMP biosynthesis via de novo pathway; UMP from orotate: step 2/2.</text>
</comment>
<comment type="subunit">
    <text evidence="1">Homodimer.</text>
</comment>
<comment type="similarity">
    <text evidence="1">Belongs to the OMP decarboxylase family. Type 1 subfamily.</text>
</comment>
<feature type="chain" id="PRO_0000134533" description="Orotidine 5'-phosphate decarboxylase">
    <location>
        <begin position="1"/>
        <end position="236"/>
    </location>
</feature>
<feature type="active site" description="Proton donor" evidence="1">
    <location>
        <position position="68"/>
    </location>
</feature>
<feature type="binding site" evidence="1">
    <location>
        <position position="17"/>
    </location>
    <ligand>
        <name>substrate</name>
    </ligand>
</feature>
<feature type="binding site" evidence="1">
    <location>
        <position position="39"/>
    </location>
    <ligand>
        <name>substrate</name>
    </ligand>
</feature>
<feature type="binding site" evidence="1">
    <location>
        <begin position="66"/>
        <end position="75"/>
    </location>
    <ligand>
        <name>substrate</name>
    </ligand>
</feature>
<feature type="binding site" evidence="1">
    <location>
        <position position="125"/>
    </location>
    <ligand>
        <name>substrate</name>
    </ligand>
</feature>
<feature type="binding site" evidence="1">
    <location>
        <position position="186"/>
    </location>
    <ligand>
        <name>substrate</name>
    </ligand>
</feature>
<feature type="binding site" evidence="1">
    <location>
        <position position="195"/>
    </location>
    <ligand>
        <name>substrate</name>
    </ligand>
</feature>
<feature type="binding site" evidence="1">
    <location>
        <position position="215"/>
    </location>
    <ligand>
        <name>substrate</name>
    </ligand>
</feature>
<feature type="binding site" evidence="1">
    <location>
        <position position="216"/>
    </location>
    <ligand>
        <name>substrate</name>
    </ligand>
</feature>
<evidence type="ECO:0000255" key="1">
    <source>
        <dbReference type="HAMAP-Rule" id="MF_01200"/>
    </source>
</evidence>